<reference key="1">
    <citation type="journal article" date="2004" name="J. Biol. Chem.">
        <title>A novel marker of tissue junctions, collagen XXII.</title>
        <authorList>
            <person name="Koch M."/>
            <person name="Schulze J."/>
            <person name="Hansen U."/>
            <person name="Ashwodt T."/>
            <person name="Keene D.R."/>
            <person name="Brunken W.J."/>
            <person name="Burgeson R.E."/>
            <person name="Bruckner P."/>
            <person name="Bruckner-Tuderman L."/>
        </authorList>
    </citation>
    <scope>NUCLEOTIDE SEQUENCE [MRNA] (ISOFORM 1)</scope>
    <scope>TISSUE SPECIFICITY</scope>
    <scope>VARIANT GLY-320</scope>
    <source>
        <tissue>Cartilage</tissue>
    </source>
</reference>
<reference key="2">
    <citation type="journal article" date="2006" name="Nature">
        <title>DNA sequence and analysis of human chromosome 8.</title>
        <authorList>
            <person name="Nusbaum C."/>
            <person name="Mikkelsen T.S."/>
            <person name="Zody M.C."/>
            <person name="Asakawa S."/>
            <person name="Taudien S."/>
            <person name="Garber M."/>
            <person name="Kodira C.D."/>
            <person name="Schueler M.G."/>
            <person name="Shimizu A."/>
            <person name="Whittaker C.A."/>
            <person name="Chang J.L."/>
            <person name="Cuomo C.A."/>
            <person name="Dewar K."/>
            <person name="FitzGerald M.G."/>
            <person name="Yang X."/>
            <person name="Allen N.R."/>
            <person name="Anderson S."/>
            <person name="Asakawa T."/>
            <person name="Blechschmidt K."/>
            <person name="Bloom T."/>
            <person name="Borowsky M.L."/>
            <person name="Butler J."/>
            <person name="Cook A."/>
            <person name="Corum B."/>
            <person name="DeArellano K."/>
            <person name="DeCaprio D."/>
            <person name="Dooley K.T."/>
            <person name="Dorris L. III"/>
            <person name="Engels R."/>
            <person name="Gloeckner G."/>
            <person name="Hafez N."/>
            <person name="Hagopian D.S."/>
            <person name="Hall J.L."/>
            <person name="Ishikawa S.K."/>
            <person name="Jaffe D.B."/>
            <person name="Kamat A."/>
            <person name="Kudoh J."/>
            <person name="Lehmann R."/>
            <person name="Lokitsang T."/>
            <person name="Macdonald P."/>
            <person name="Major J.E."/>
            <person name="Matthews C.D."/>
            <person name="Mauceli E."/>
            <person name="Menzel U."/>
            <person name="Mihalev A.H."/>
            <person name="Minoshima S."/>
            <person name="Murayama Y."/>
            <person name="Naylor J.W."/>
            <person name="Nicol R."/>
            <person name="Nguyen C."/>
            <person name="O'Leary S.B."/>
            <person name="O'Neill K."/>
            <person name="Parker S.C.J."/>
            <person name="Polley A."/>
            <person name="Raymond C.K."/>
            <person name="Reichwald K."/>
            <person name="Rodriguez J."/>
            <person name="Sasaki T."/>
            <person name="Schilhabel M."/>
            <person name="Siddiqui R."/>
            <person name="Smith C.L."/>
            <person name="Sneddon T.P."/>
            <person name="Talamas J.A."/>
            <person name="Tenzin P."/>
            <person name="Topham K."/>
            <person name="Venkataraman V."/>
            <person name="Wen G."/>
            <person name="Yamazaki S."/>
            <person name="Young S.K."/>
            <person name="Zeng Q."/>
            <person name="Zimmer A.R."/>
            <person name="Rosenthal A."/>
            <person name="Birren B.W."/>
            <person name="Platzer M."/>
            <person name="Shimizu N."/>
            <person name="Lander E.S."/>
        </authorList>
    </citation>
    <scope>NUCLEOTIDE SEQUENCE [LARGE SCALE GENOMIC DNA]</scope>
</reference>
<reference key="3">
    <citation type="journal article" date="2004" name="Genome Res.">
        <title>The status, quality, and expansion of the NIH full-length cDNA project: the Mammalian Gene Collection (MGC).</title>
        <authorList>
            <consortium name="The MGC Project Team"/>
        </authorList>
    </citation>
    <scope>NUCLEOTIDE SEQUENCE [LARGE SCALE MRNA] (ISOFORM 3)</scope>
    <scope>NUCLEOTIDE SEQUENCE [LARGE SCALE MRNA] OF 753-1626 (ISOFORMS 2/3)</scope>
    <scope>VARIANTS GLY-320 AND ASP-938</scope>
    <source>
        <tissue>Brain</tissue>
    </source>
</reference>
<keyword id="KW-0025">Alternative splicing</keyword>
<keyword id="KW-0176">Collagen</keyword>
<keyword id="KW-0963">Cytoplasm</keyword>
<keyword id="KW-0272">Extracellular matrix</keyword>
<keyword id="KW-0325">Glycoprotein</keyword>
<keyword id="KW-1267">Proteomics identification</keyword>
<keyword id="KW-1185">Reference proteome</keyword>
<keyword id="KW-0677">Repeat</keyword>
<keyword id="KW-0964">Secreted</keyword>
<keyword id="KW-0732">Signal</keyword>
<protein>
    <recommendedName>
        <fullName>Collagen alpha-1(XXII) chain</fullName>
    </recommendedName>
</protein>
<comment type="function">
    <text>Acts as a cell adhesion ligand for skin epithelial cells and fibroblasts.</text>
</comment>
<comment type="subcellular location">
    <subcellularLocation>
        <location>Secreted</location>
        <location>Extracellular space</location>
        <location>Extracellular matrix</location>
    </subcellularLocation>
    <subcellularLocation>
        <location evidence="1">Cytoplasm</location>
    </subcellularLocation>
</comment>
<comment type="alternative products">
    <event type="alternative splicing"/>
    <isoform>
        <id>Q8NFW1-1</id>
        <name>1</name>
        <sequence type="displayed"/>
    </isoform>
    <isoform>
        <id>Q8NFW1-2</id>
        <name>2</name>
        <sequence type="described" ref="VSP_031087"/>
    </isoform>
    <isoform>
        <id>Q8NFW1-3</id>
        <name>3</name>
        <sequence type="described" ref="VSP_038200 VSP_031087"/>
    </isoform>
</comment>
<comment type="tissue specificity">
    <text evidence="5">Restrictive expression is observed at tissue junctions such as the myotendinous junction in skeletal and heart muscle, the articular cartilage-synovial fluid junction, or the border between the anagen hair follicle and the dermis in the skin. It is deposited in the basement membrane zone of the myotendinous junction and the hair follicle and associated with the extrafibrillar matrix in cartilage.</text>
</comment>
<comment type="similarity">
    <text evidence="8">Belongs to the fibril-associated collagens with interrupted helices (FACIT) family.</text>
</comment>
<feature type="signal peptide" evidence="2">
    <location>
        <begin position="1"/>
        <end position="27"/>
    </location>
</feature>
<feature type="chain" id="PRO_0000317615" description="Collagen alpha-1(XXII) chain">
    <location>
        <begin position="28"/>
        <end position="1626"/>
    </location>
</feature>
<feature type="domain" description="VWFA" evidence="3">
    <location>
        <begin position="38"/>
        <end position="213"/>
    </location>
</feature>
<feature type="domain" description="Laminin G-like">
    <location>
        <begin position="239"/>
        <end position="427"/>
    </location>
</feature>
<feature type="domain" description="Collagen-like 1">
    <location>
        <begin position="481"/>
        <end position="520"/>
    </location>
</feature>
<feature type="domain" description="Collagen-like 2">
    <location>
        <begin position="526"/>
        <end position="565"/>
    </location>
</feature>
<feature type="domain" description="Collagen-like 3">
    <location>
        <begin position="566"/>
        <end position="625"/>
    </location>
</feature>
<feature type="domain" description="Collagen-like 4">
    <location>
        <begin position="657"/>
        <end position="708"/>
    </location>
</feature>
<feature type="domain" description="Collagen-like 5">
    <location>
        <begin position="714"/>
        <end position="773"/>
    </location>
</feature>
<feature type="domain" description="Collagen-like 6">
    <location>
        <begin position="774"/>
        <end position="833"/>
    </location>
</feature>
<feature type="domain" description="Collagen-like 7">
    <location>
        <begin position="868"/>
        <end position="922"/>
    </location>
</feature>
<feature type="domain" description="Collagen-like 8">
    <location>
        <begin position="925"/>
        <end position="984"/>
    </location>
</feature>
<feature type="domain" description="Collagen-like 9">
    <location>
        <begin position="1047"/>
        <end position="1095"/>
    </location>
</feature>
<feature type="domain" description="Collagen-like 10">
    <location>
        <begin position="1118"/>
        <end position="1155"/>
    </location>
</feature>
<feature type="domain" description="Collagen-like 11">
    <location>
        <begin position="1156"/>
        <end position="1215"/>
    </location>
</feature>
<feature type="domain" description="Collagen-like 12">
    <location>
        <begin position="1249"/>
        <end position="1308"/>
    </location>
</feature>
<feature type="domain" description="Collagen-like 13">
    <location>
        <begin position="1315"/>
        <end position="1374"/>
    </location>
</feature>
<feature type="domain" description="Collagen-like 14">
    <location>
        <begin position="1387"/>
        <end position="1446"/>
    </location>
</feature>
<feature type="domain" description="Collagen-like 15">
    <location>
        <begin position="1495"/>
        <end position="1550"/>
    </location>
</feature>
<feature type="domain" description="Collagen-like 16">
    <location>
        <begin position="1575"/>
        <end position="1604"/>
    </location>
</feature>
<feature type="region of interest" description="Disordered" evidence="4">
    <location>
        <begin position="506"/>
        <end position="1002"/>
    </location>
</feature>
<feature type="region of interest" description="Disordered" evidence="4">
    <location>
        <begin position="1019"/>
        <end position="1103"/>
    </location>
</feature>
<feature type="region of interest" description="Disordered" evidence="4">
    <location>
        <begin position="1119"/>
        <end position="1458"/>
    </location>
</feature>
<feature type="region of interest" description="Disordered" evidence="4">
    <location>
        <begin position="1491"/>
        <end position="1609"/>
    </location>
</feature>
<feature type="compositionally biased region" description="Basic and acidic residues" evidence="4">
    <location>
        <begin position="544"/>
        <end position="553"/>
    </location>
</feature>
<feature type="compositionally biased region" description="Pro residues" evidence="4">
    <location>
        <begin position="571"/>
        <end position="580"/>
    </location>
</feature>
<feature type="compositionally biased region" description="Basic and acidic residues" evidence="4">
    <location>
        <begin position="591"/>
        <end position="606"/>
    </location>
</feature>
<feature type="compositionally biased region" description="Low complexity" evidence="4">
    <location>
        <begin position="661"/>
        <end position="670"/>
    </location>
</feature>
<feature type="compositionally biased region" description="Pro residues" evidence="4">
    <location>
        <begin position="715"/>
        <end position="728"/>
    </location>
</feature>
<feature type="compositionally biased region" description="Pro residues" evidence="4">
    <location>
        <begin position="742"/>
        <end position="751"/>
    </location>
</feature>
<feature type="compositionally biased region" description="Basic and acidic residues" evidence="4">
    <location>
        <begin position="769"/>
        <end position="778"/>
    </location>
</feature>
<feature type="compositionally biased region" description="Basic and acidic residues" evidence="4">
    <location>
        <begin position="815"/>
        <end position="826"/>
    </location>
</feature>
<feature type="compositionally biased region" description="Low complexity" evidence="4">
    <location>
        <begin position="908"/>
        <end position="939"/>
    </location>
</feature>
<feature type="compositionally biased region" description="Basic and acidic residues" evidence="4">
    <location>
        <begin position="945"/>
        <end position="957"/>
    </location>
</feature>
<feature type="compositionally biased region" description="Low complexity" evidence="4">
    <location>
        <begin position="959"/>
        <end position="974"/>
    </location>
</feature>
<feature type="compositionally biased region" description="Low complexity" evidence="4">
    <location>
        <begin position="1056"/>
        <end position="1065"/>
    </location>
</feature>
<feature type="compositionally biased region" description="Basic and acidic residues" evidence="4">
    <location>
        <begin position="1131"/>
        <end position="1151"/>
    </location>
</feature>
<feature type="compositionally biased region" description="Basic and acidic residues" evidence="4">
    <location>
        <begin position="1173"/>
        <end position="1185"/>
    </location>
</feature>
<feature type="compositionally biased region" description="Low complexity" evidence="4">
    <location>
        <begin position="1205"/>
        <end position="1223"/>
    </location>
</feature>
<feature type="compositionally biased region" description="Basic and acidic residues" evidence="4">
    <location>
        <begin position="1241"/>
        <end position="1250"/>
    </location>
</feature>
<feature type="compositionally biased region" description="Low complexity" evidence="4">
    <location>
        <begin position="1260"/>
        <end position="1275"/>
    </location>
</feature>
<feature type="compositionally biased region" description="Low complexity" evidence="4">
    <location>
        <begin position="1379"/>
        <end position="1389"/>
    </location>
</feature>
<feature type="compositionally biased region" description="Basic and acidic residues" evidence="4">
    <location>
        <begin position="1391"/>
        <end position="1404"/>
    </location>
</feature>
<feature type="compositionally biased region" description="Gly residues" evidence="4">
    <location>
        <begin position="1405"/>
        <end position="1414"/>
    </location>
</feature>
<feature type="compositionally biased region" description="Pro residues" evidence="4">
    <location>
        <begin position="1440"/>
        <end position="1449"/>
    </location>
</feature>
<feature type="compositionally biased region" description="Gly residues" evidence="4">
    <location>
        <begin position="1521"/>
        <end position="1530"/>
    </location>
</feature>
<feature type="compositionally biased region" description="Pro residues" evidence="4">
    <location>
        <begin position="1595"/>
        <end position="1604"/>
    </location>
</feature>
<feature type="glycosylation site" description="N-linked (GlcNAc...) asparagine" evidence="2">
    <location>
        <position position="375"/>
    </location>
</feature>
<feature type="splice variant" id="VSP_038200" description="In isoform 3." evidence="7">
    <location>
        <begin position="341"/>
        <end position="627"/>
    </location>
</feature>
<feature type="splice variant" id="VSP_031087" description="In isoform 2 and isoform 3." evidence="7">
    <location>
        <begin position="1005"/>
        <end position="1024"/>
    </location>
</feature>
<feature type="sequence variant" id="VAR_038562" description="In dbSNP:rs2292927." evidence="5 6">
    <original>S</original>
    <variation>G</variation>
    <location>
        <position position="320"/>
    </location>
</feature>
<feature type="sequence variant" id="VAR_038563" description="In dbSNP:rs10111520.">
    <original>P</original>
    <variation>T</variation>
    <location>
        <position position="703"/>
    </location>
</feature>
<feature type="sequence variant" id="VAR_038564" description="In dbSNP:rs4909444." evidence="6">
    <original>A</original>
    <variation>D</variation>
    <location>
        <position position="938"/>
    </location>
</feature>
<feature type="sequence conflict" description="In Ref. 2; AAH42075." evidence="8" ref="2">
    <original>GKDGPNGPPGPPGTK</original>
    <variation>CILAAKTAPGLKQLN</variation>
    <location>
        <begin position="753"/>
        <end position="767"/>
    </location>
</feature>
<organism>
    <name type="scientific">Homo sapiens</name>
    <name type="common">Human</name>
    <dbReference type="NCBI Taxonomy" id="9606"/>
    <lineage>
        <taxon>Eukaryota</taxon>
        <taxon>Metazoa</taxon>
        <taxon>Chordata</taxon>
        <taxon>Craniata</taxon>
        <taxon>Vertebrata</taxon>
        <taxon>Euteleostomi</taxon>
        <taxon>Mammalia</taxon>
        <taxon>Eutheria</taxon>
        <taxon>Euarchontoglires</taxon>
        <taxon>Primates</taxon>
        <taxon>Haplorrhini</taxon>
        <taxon>Catarrhini</taxon>
        <taxon>Hominidae</taxon>
        <taxon>Homo</taxon>
    </lineage>
</organism>
<evidence type="ECO:0000250" key="1"/>
<evidence type="ECO:0000255" key="2"/>
<evidence type="ECO:0000255" key="3">
    <source>
        <dbReference type="PROSITE-ProRule" id="PRU00219"/>
    </source>
</evidence>
<evidence type="ECO:0000256" key="4">
    <source>
        <dbReference type="SAM" id="MobiDB-lite"/>
    </source>
</evidence>
<evidence type="ECO:0000269" key="5">
    <source>
    </source>
</evidence>
<evidence type="ECO:0000269" key="6">
    <source>
    </source>
</evidence>
<evidence type="ECO:0000303" key="7">
    <source>
    </source>
</evidence>
<evidence type="ECO:0000305" key="8"/>
<gene>
    <name type="primary">COL22A1</name>
</gene>
<dbReference type="EMBL" id="AF406780">
    <property type="protein sequence ID" value="AAN03620.1"/>
    <property type="molecule type" value="mRNA"/>
</dbReference>
<dbReference type="EMBL" id="AC068476">
    <property type="status" value="NOT_ANNOTATED_CDS"/>
    <property type="molecule type" value="Genomic_DNA"/>
</dbReference>
<dbReference type="EMBL" id="AC105130">
    <property type="status" value="NOT_ANNOTATED_CDS"/>
    <property type="molecule type" value="Genomic_DNA"/>
</dbReference>
<dbReference type="EMBL" id="AC115720">
    <property type="status" value="NOT_ANNOTATED_CDS"/>
    <property type="molecule type" value="Genomic_DNA"/>
</dbReference>
<dbReference type="EMBL" id="AP006262">
    <property type="status" value="NOT_ANNOTATED_CDS"/>
    <property type="molecule type" value="Genomic_DNA"/>
</dbReference>
<dbReference type="EMBL" id="BC042075">
    <property type="protein sequence ID" value="AAH42075.1"/>
    <property type="molecule type" value="mRNA"/>
</dbReference>
<dbReference type="EMBL" id="BC144535">
    <property type="protein sequence ID" value="AAI44536.1"/>
    <property type="molecule type" value="mRNA"/>
</dbReference>
<dbReference type="CCDS" id="CCDS6376.1">
    <molecule id="Q8NFW1-1"/>
</dbReference>
<dbReference type="RefSeq" id="NP_690848.1">
    <molecule id="Q8NFW1-1"/>
    <property type="nucleotide sequence ID" value="NM_152888.3"/>
</dbReference>
<dbReference type="RefSeq" id="XP_011515185.1">
    <molecule id="Q8NFW1-2"/>
    <property type="nucleotide sequence ID" value="XM_011516883.3"/>
</dbReference>
<dbReference type="SMR" id="Q8NFW1"/>
<dbReference type="BioGRID" id="127976">
    <property type="interactions" value="8"/>
</dbReference>
<dbReference type="ComplexPortal" id="CPX-1763">
    <property type="entry name" value="Collagen type XXII trimer"/>
</dbReference>
<dbReference type="FunCoup" id="Q8NFW1">
    <property type="interactions" value="211"/>
</dbReference>
<dbReference type="IntAct" id="Q8NFW1">
    <property type="interactions" value="2"/>
</dbReference>
<dbReference type="STRING" id="9606.ENSP00000303153"/>
<dbReference type="GlyCosmos" id="Q8NFW1">
    <property type="glycosylation" value="3 sites, 1 glycan"/>
</dbReference>
<dbReference type="GlyGen" id="Q8NFW1">
    <property type="glycosylation" value="10 sites, 2 O-linked glycans (5 sites)"/>
</dbReference>
<dbReference type="iPTMnet" id="Q8NFW1"/>
<dbReference type="PhosphoSitePlus" id="Q8NFW1"/>
<dbReference type="BioMuta" id="COL22A1"/>
<dbReference type="DMDM" id="296434458"/>
<dbReference type="jPOST" id="Q8NFW1"/>
<dbReference type="MassIVE" id="Q8NFW1"/>
<dbReference type="PaxDb" id="9606-ENSP00000303153"/>
<dbReference type="PeptideAtlas" id="Q8NFW1"/>
<dbReference type="ProteomicsDB" id="73370">
    <molecule id="Q8NFW1-1"/>
</dbReference>
<dbReference type="ProteomicsDB" id="73371">
    <molecule id="Q8NFW1-2"/>
</dbReference>
<dbReference type="ProteomicsDB" id="73372">
    <molecule id="Q8NFW1-3"/>
</dbReference>
<dbReference type="Antibodypedia" id="14343">
    <property type="antibodies" value="28 antibodies from 10 providers"/>
</dbReference>
<dbReference type="DNASU" id="169044"/>
<dbReference type="Ensembl" id="ENST00000303045.11">
    <molecule id="Q8NFW1-1"/>
    <property type="protein sequence ID" value="ENSP00000303153.6"/>
    <property type="gene ID" value="ENSG00000169436.18"/>
</dbReference>
<dbReference type="GeneID" id="169044"/>
<dbReference type="KEGG" id="hsa:169044"/>
<dbReference type="MANE-Select" id="ENST00000303045.11">
    <property type="protein sequence ID" value="ENSP00000303153.6"/>
    <property type="RefSeq nucleotide sequence ID" value="NM_152888.3"/>
    <property type="RefSeq protein sequence ID" value="NP_690848.1"/>
</dbReference>
<dbReference type="UCSC" id="uc003yvd.3">
    <molecule id="Q8NFW1-1"/>
    <property type="organism name" value="human"/>
</dbReference>
<dbReference type="AGR" id="HGNC:22989"/>
<dbReference type="CTD" id="169044"/>
<dbReference type="DisGeNET" id="169044"/>
<dbReference type="GeneCards" id="COL22A1"/>
<dbReference type="HGNC" id="HGNC:22989">
    <property type="gene designation" value="COL22A1"/>
</dbReference>
<dbReference type="HPA" id="ENSG00000169436">
    <property type="expression patterns" value="Tissue enriched (pituitary)"/>
</dbReference>
<dbReference type="MIM" id="610026">
    <property type="type" value="gene"/>
</dbReference>
<dbReference type="neXtProt" id="NX_Q8NFW1"/>
<dbReference type="OpenTargets" id="ENSG00000169436"/>
<dbReference type="PharmGKB" id="PA134914705"/>
<dbReference type="VEuPathDB" id="HostDB:ENSG00000169436"/>
<dbReference type="eggNOG" id="KOG1217">
    <property type="taxonomic scope" value="Eukaryota"/>
</dbReference>
<dbReference type="eggNOG" id="KOG3544">
    <property type="taxonomic scope" value="Eukaryota"/>
</dbReference>
<dbReference type="GeneTree" id="ENSGT00940000159308"/>
<dbReference type="HOGENOM" id="CLU_003584_0_0_1"/>
<dbReference type="InParanoid" id="Q8NFW1"/>
<dbReference type="OMA" id="QMQPAHV"/>
<dbReference type="OrthoDB" id="10256829at2759"/>
<dbReference type="PAN-GO" id="Q8NFW1">
    <property type="GO annotations" value="6 GO annotations based on evolutionary models"/>
</dbReference>
<dbReference type="PhylomeDB" id="Q8NFW1"/>
<dbReference type="TreeFam" id="TF332934"/>
<dbReference type="PathwayCommons" id="Q8NFW1"/>
<dbReference type="Reactome" id="R-HSA-1650814">
    <property type="pathway name" value="Collagen biosynthesis and modifying enzymes"/>
</dbReference>
<dbReference type="Reactome" id="R-HSA-8948216">
    <property type="pathway name" value="Collagen chain trimerization"/>
</dbReference>
<dbReference type="SignaLink" id="Q8NFW1"/>
<dbReference type="BioGRID-ORCS" id="169044">
    <property type="hits" value="8 hits in 1142 CRISPR screens"/>
</dbReference>
<dbReference type="ChiTaRS" id="COL22A1">
    <property type="organism name" value="human"/>
</dbReference>
<dbReference type="GenomeRNAi" id="169044"/>
<dbReference type="Pharos" id="Q8NFW1">
    <property type="development level" value="Tbio"/>
</dbReference>
<dbReference type="PRO" id="PR:Q8NFW1"/>
<dbReference type="Proteomes" id="UP000005640">
    <property type="component" value="Chromosome 8"/>
</dbReference>
<dbReference type="RNAct" id="Q8NFW1">
    <property type="molecule type" value="protein"/>
</dbReference>
<dbReference type="Bgee" id="ENSG00000169436">
    <property type="expression patterns" value="Expressed in pituitary gland and 112 other cell types or tissues"/>
</dbReference>
<dbReference type="ExpressionAtlas" id="Q8NFW1">
    <property type="expression patterns" value="baseline and differential"/>
</dbReference>
<dbReference type="GO" id="GO:0005604">
    <property type="term" value="C:basement membrane"/>
    <property type="evidence" value="ECO:0000318"/>
    <property type="project" value="GO_Central"/>
</dbReference>
<dbReference type="GO" id="GO:0005581">
    <property type="term" value="C:collagen trimer"/>
    <property type="evidence" value="ECO:0007669"/>
    <property type="project" value="UniProtKB-KW"/>
</dbReference>
<dbReference type="GO" id="GO:0005788">
    <property type="term" value="C:endoplasmic reticulum lumen"/>
    <property type="evidence" value="ECO:0000304"/>
    <property type="project" value="Reactome"/>
</dbReference>
<dbReference type="GO" id="GO:0005576">
    <property type="term" value="C:extracellular region"/>
    <property type="evidence" value="ECO:0000304"/>
    <property type="project" value="Reactome"/>
</dbReference>
<dbReference type="GO" id="GO:0005615">
    <property type="term" value="C:extracellular space"/>
    <property type="evidence" value="ECO:0000318"/>
    <property type="project" value="GO_Central"/>
</dbReference>
<dbReference type="GO" id="GO:0030020">
    <property type="term" value="F:extracellular matrix structural constituent conferring tensile strength"/>
    <property type="evidence" value="ECO:0000318"/>
    <property type="project" value="GO_Central"/>
</dbReference>
<dbReference type="FunFam" id="2.60.120.200:FF:000108">
    <property type="entry name" value="collagen alpha-1(XXII) chain isoform X1"/>
    <property type="match status" value="1"/>
</dbReference>
<dbReference type="FunFam" id="3.40.50.410:FF:000004">
    <property type="entry name" value="collagen alpha-6(VI) chain"/>
    <property type="match status" value="1"/>
</dbReference>
<dbReference type="Gene3D" id="2.60.120.200">
    <property type="match status" value="1"/>
</dbReference>
<dbReference type="Gene3D" id="3.40.50.410">
    <property type="entry name" value="von Willebrand factor, type A domain"/>
    <property type="match status" value="1"/>
</dbReference>
<dbReference type="InterPro" id="IPR008160">
    <property type="entry name" value="Collagen"/>
</dbReference>
<dbReference type="InterPro" id="IPR050149">
    <property type="entry name" value="Collagen_superfamily"/>
</dbReference>
<dbReference type="InterPro" id="IPR013320">
    <property type="entry name" value="ConA-like_dom_sf"/>
</dbReference>
<dbReference type="InterPro" id="IPR048287">
    <property type="entry name" value="TSPN-like_N"/>
</dbReference>
<dbReference type="InterPro" id="IPR002035">
    <property type="entry name" value="VWF_A"/>
</dbReference>
<dbReference type="InterPro" id="IPR036465">
    <property type="entry name" value="vWFA_dom_sf"/>
</dbReference>
<dbReference type="PANTHER" id="PTHR24023:SF1112">
    <property type="entry name" value="COL_CUTICLE_N DOMAIN-CONTAINING PROTEIN-RELATED"/>
    <property type="match status" value="1"/>
</dbReference>
<dbReference type="PANTHER" id="PTHR24023">
    <property type="entry name" value="COLLAGEN ALPHA"/>
    <property type="match status" value="1"/>
</dbReference>
<dbReference type="Pfam" id="PF01391">
    <property type="entry name" value="Collagen"/>
    <property type="match status" value="12"/>
</dbReference>
<dbReference type="Pfam" id="PF00092">
    <property type="entry name" value="VWA"/>
    <property type="match status" value="1"/>
</dbReference>
<dbReference type="PRINTS" id="PR00453">
    <property type="entry name" value="VWFADOMAIN"/>
</dbReference>
<dbReference type="SMART" id="SM00210">
    <property type="entry name" value="TSPN"/>
    <property type="match status" value="1"/>
</dbReference>
<dbReference type="SMART" id="SM00327">
    <property type="entry name" value="VWA"/>
    <property type="match status" value="1"/>
</dbReference>
<dbReference type="SUPFAM" id="SSF49899">
    <property type="entry name" value="Concanavalin A-like lectins/glucanases"/>
    <property type="match status" value="1"/>
</dbReference>
<dbReference type="SUPFAM" id="SSF53300">
    <property type="entry name" value="vWA-like"/>
    <property type="match status" value="1"/>
</dbReference>
<dbReference type="PROSITE" id="PS50234">
    <property type="entry name" value="VWFA"/>
    <property type="match status" value="1"/>
</dbReference>
<name>COMA1_HUMAN</name>
<proteinExistence type="evidence at protein level"/>
<accession>Q8NFW1</accession>
<accession>B7ZMH0</accession>
<accession>C9K0G4</accession>
<accession>Q8IVT9</accession>
<sequence length="1626" mass="161145">MAGLRGNAVAGLLWMLLLWSGGGGCQAQRAGCKSVHYDLVFLLDTSSSVGKEDFEKVRQWVANLVDTFEVGPDRTRVGVVRYSDRPTTAFELGLFGSQEEVKAAARRLAYHGGNTNTGDALRYITARSFSPHAGGRPRDRAYKQVAILLTDGRSQDLVLDAAAAAHRAGIRIFAVGVGEALKEELEEIASEPKSAHVFHVSDFNAIDKIRGKLRRRLCENVLCPSVRVEGDRFKHTNGGTKEITGFDLMDLFSVKEILGKRENGAQSSYVRMGSFPVVQSTEDVFPQGLPDEYAFVTTFRFRKTSRKEDWYIWQVIDQYSIPQVSIRLDGENKAVEYNAVGAMKDAVRVVFRGSRVNDLFDRDWHKMALSIQAQNVSLHIDCALVQTLPIEERENIDIQGKTVIGKRLYDSVPIDFDLQRIVIYCDSRHAELETCCDIPSGPCQVTVVTEPPPPPPPQRPPTPGSEQIGFLKTINCSCPAGEKGEMGVAGPMGLPGPKGDIGAIGPVGAPGPKGEKGDVGIGPFGQGEKGEKGSLGLPGPPGRDGSKGMRGEPGELGEPGLPGEVGMRGPQGPPGLPGPPGRVGAPGLQGERGEKGTRGEKGERGLDGFPGKPGDTGQQGRPGPSGVAGPQGEKGDVGPAGPPGVPGSVVQQEGLKGEQGAPGPRGHQGAPGPPGARGPIGPEGRDGPPGLQGLRGKKGDMGPPGIPGLLGLQGPPGPPGVPGPPGPGGSPGLPGEIGFPGKPGPPGPTGPPGKDGPNGPPGPPGTKGEPGERGEDGLPGKPGLRGEIGEQGLAGRPGEKGEAGLPGAPGFPGVRGEKGDQGEKGELGLPGLKGDRGEKGEAGPAGPPGLPGTTSLFTPHPRMPGEQGPKGEKGDPGLPGEPGLQGRPGELGPQGPTGPPGAKGQEGAHGAPGAAGNPGAPGHVGAPGPSGPPGSVGAPGLRGTPGKDGERGEKGAAGEEGSPGPVGPRGDPGAPGLPGPPGKGKDGEPGLRGSPGLPGPLGTKAACGKVRGSENCALGGQCVKGDRGAPGIPGSPGSRGDPGIGVAGPPGPSGPPGDKGSPGSRGLPGFPGPQGPAGRDGAPGNPGERGPPGKPGLSSLLSPGDINLLAKDVCNDCPPGPPGLPGLPGFKGDKGVPGKPGREGTEGKKGEAGPPGLPGPPGIAGPQGSQGERGADGEVGQKGDQGHPGVPGFMGPPGNPGPPGADGIAGAAGPPGIQGSPGKEGPPGPQGPSGLPGIPGEEGKEGRDGKPGPPGEPGKAGEPGLPGPEGARGPPGFKGHTGDSGAPGPRGESGAMGLPGQEGLPGKDGDTGPTGPQGPQGPRGPPGKNGSPGSPGEPGPSGTPGQKGSKGENGSPGLPGFLGPRGPPGEPGEKGVPGKEGVPGKPGEPGFKGERGDPGIKGDKGPPGGKGQPGDPGIPGHKGHTGLMGPQGLPGENGPVGPPGPPGQPGFPGLRGESPSMETLRRLIQEELGKQLETRLAYLLAQMPPAYMKSSQGRPGPPGPPGKDGLPGRAGPMGEPGRPGQGGLEGPSGPIGPKGERGAKGDPGAPGVGLRGEMGPPGIPGQPGEPGYAKDGLPGIPGPQGETGPAGHPGLPGPPGPPGQCDPSQCAYFASLAARPGNVKGP</sequence>